<protein>
    <recommendedName>
        <fullName evidence="1">GTP cyclohydrolase FolE2 2</fullName>
        <ecNumber evidence="1">3.5.4.16</ecNumber>
    </recommendedName>
</protein>
<organism>
    <name type="scientific">Cupriavidus metallidurans (strain ATCC 43123 / DSM 2839 / NBRC 102507 / CH34)</name>
    <name type="common">Ralstonia metallidurans</name>
    <dbReference type="NCBI Taxonomy" id="266264"/>
    <lineage>
        <taxon>Bacteria</taxon>
        <taxon>Pseudomonadati</taxon>
        <taxon>Pseudomonadota</taxon>
        <taxon>Betaproteobacteria</taxon>
        <taxon>Burkholderiales</taxon>
        <taxon>Burkholderiaceae</taxon>
        <taxon>Cupriavidus</taxon>
    </lineage>
</organism>
<comment type="function">
    <text evidence="1">Converts GTP to 7,8-dihydroneopterin triphosphate.</text>
</comment>
<comment type="catalytic activity">
    <reaction evidence="1">
        <text>GTP + H2O = 7,8-dihydroneopterin 3'-triphosphate + formate + H(+)</text>
        <dbReference type="Rhea" id="RHEA:17473"/>
        <dbReference type="ChEBI" id="CHEBI:15377"/>
        <dbReference type="ChEBI" id="CHEBI:15378"/>
        <dbReference type="ChEBI" id="CHEBI:15740"/>
        <dbReference type="ChEBI" id="CHEBI:37565"/>
        <dbReference type="ChEBI" id="CHEBI:58462"/>
        <dbReference type="EC" id="3.5.4.16"/>
    </reaction>
</comment>
<comment type="pathway">
    <text evidence="1">Cofactor biosynthesis; 7,8-dihydroneopterin triphosphate biosynthesis; 7,8-dihydroneopterin triphosphate from GTP: step 1/1.</text>
</comment>
<comment type="similarity">
    <text evidence="1">Belongs to the GTP cyclohydrolase IV family.</text>
</comment>
<proteinExistence type="inferred from homology"/>
<sequence length="267" mass="29908">MNDINPAFVMPDVQSSVDTRQIVIQRVGVKGVRYPLTLKTPAGAVGTVGTFNMDVRLPADQKGTHMSRFVALLEENRAPLDLAAFRALVDDMLVRLEADAGRIEVSFPYFITKTAPVSGVQSLLDYEVTLVAEARDGQTRMFMTALVPVTSLCPCSKKISQYGAHNQRSHITMRVELAGDLDVEALVRMAEEEASCELWGLLKRPDEKFVTERAYENPKFVEDLVRDIAMRLNADDRIVAYTLEAENFESIHNHSAYAVIEHDKRHQ</sequence>
<gene>
    <name evidence="1" type="primary">folE2-2</name>
    <name type="ordered locus">Rmet_2614</name>
</gene>
<keyword id="KW-0378">Hydrolase</keyword>
<keyword id="KW-1185">Reference proteome</keyword>
<dbReference type="EC" id="3.5.4.16" evidence="1"/>
<dbReference type="EMBL" id="CP000352">
    <property type="protein sequence ID" value="ABF09491.1"/>
    <property type="molecule type" value="Genomic_DNA"/>
</dbReference>
<dbReference type="SMR" id="Q1LK35"/>
<dbReference type="STRING" id="266264.Rmet_2614"/>
<dbReference type="KEGG" id="rme:Rmet_2614"/>
<dbReference type="eggNOG" id="COG1469">
    <property type="taxonomic scope" value="Bacteria"/>
</dbReference>
<dbReference type="HOGENOM" id="CLU_062816_1_1_4"/>
<dbReference type="UniPathway" id="UPA00848">
    <property type="reaction ID" value="UER00151"/>
</dbReference>
<dbReference type="Proteomes" id="UP000002429">
    <property type="component" value="Chromosome"/>
</dbReference>
<dbReference type="GO" id="GO:0003934">
    <property type="term" value="F:GTP cyclohydrolase I activity"/>
    <property type="evidence" value="ECO:0007669"/>
    <property type="project" value="UniProtKB-UniRule"/>
</dbReference>
<dbReference type="GO" id="GO:0046654">
    <property type="term" value="P:tetrahydrofolate biosynthetic process"/>
    <property type="evidence" value="ECO:0007669"/>
    <property type="project" value="UniProtKB-UniRule"/>
</dbReference>
<dbReference type="Gene3D" id="3.10.270.10">
    <property type="entry name" value="Urate Oxidase"/>
    <property type="match status" value="1"/>
</dbReference>
<dbReference type="HAMAP" id="MF_01527_B">
    <property type="entry name" value="GTP_cyclohydrol_B"/>
    <property type="match status" value="1"/>
</dbReference>
<dbReference type="InterPro" id="IPR022838">
    <property type="entry name" value="GTP_cyclohydrolase_FolE2"/>
</dbReference>
<dbReference type="InterPro" id="IPR003801">
    <property type="entry name" value="GTP_cyclohydrolase_FolE2/MptA"/>
</dbReference>
<dbReference type="NCBIfam" id="NF010200">
    <property type="entry name" value="PRK13674.1-1"/>
    <property type="match status" value="1"/>
</dbReference>
<dbReference type="PANTHER" id="PTHR36445">
    <property type="entry name" value="GTP CYCLOHYDROLASE MPTA"/>
    <property type="match status" value="1"/>
</dbReference>
<dbReference type="PANTHER" id="PTHR36445:SF1">
    <property type="entry name" value="GTP CYCLOHYDROLASE MPTA"/>
    <property type="match status" value="1"/>
</dbReference>
<dbReference type="Pfam" id="PF02649">
    <property type="entry name" value="GCHY-1"/>
    <property type="match status" value="1"/>
</dbReference>
<evidence type="ECO:0000255" key="1">
    <source>
        <dbReference type="HAMAP-Rule" id="MF_01527"/>
    </source>
</evidence>
<reference key="1">
    <citation type="journal article" date="2010" name="PLoS ONE">
        <title>The complete genome sequence of Cupriavidus metallidurans strain CH34, a master survivalist in harsh and anthropogenic environments.</title>
        <authorList>
            <person name="Janssen P.J."/>
            <person name="Van Houdt R."/>
            <person name="Moors H."/>
            <person name="Monsieurs P."/>
            <person name="Morin N."/>
            <person name="Michaux A."/>
            <person name="Benotmane M.A."/>
            <person name="Leys N."/>
            <person name="Vallaeys T."/>
            <person name="Lapidus A."/>
            <person name="Monchy S."/>
            <person name="Medigue C."/>
            <person name="Taghavi S."/>
            <person name="McCorkle S."/>
            <person name="Dunn J."/>
            <person name="van der Lelie D."/>
            <person name="Mergeay M."/>
        </authorList>
    </citation>
    <scope>NUCLEOTIDE SEQUENCE [LARGE SCALE GENOMIC DNA]</scope>
    <source>
        <strain>ATCC 43123 / DSM 2839 / NBRC 102507 / CH34</strain>
    </source>
</reference>
<name>GCH42_CUPMC</name>
<accession>Q1LK35</accession>
<feature type="chain" id="PRO_0000289516" description="GTP cyclohydrolase FolE2 2">
    <location>
        <begin position="1"/>
        <end position="267"/>
    </location>
</feature>
<feature type="site" description="May be catalytically important" evidence="1">
    <location>
        <position position="153"/>
    </location>
</feature>